<protein>
    <recommendedName>
        <fullName>Putative pre-mRNA-splicing factor ATP-dependent RNA helicase DHX32</fullName>
        <ecNumber>3.6.4.13</ecNumber>
    </recommendedName>
</protein>
<organism>
    <name type="scientific">Xenopus laevis</name>
    <name type="common">African clawed frog</name>
    <dbReference type="NCBI Taxonomy" id="8355"/>
    <lineage>
        <taxon>Eukaryota</taxon>
        <taxon>Metazoa</taxon>
        <taxon>Chordata</taxon>
        <taxon>Craniata</taxon>
        <taxon>Vertebrata</taxon>
        <taxon>Euteleostomi</taxon>
        <taxon>Amphibia</taxon>
        <taxon>Batrachia</taxon>
        <taxon>Anura</taxon>
        <taxon>Pipoidea</taxon>
        <taxon>Pipidae</taxon>
        <taxon>Xenopodinae</taxon>
        <taxon>Xenopus</taxon>
        <taxon>Xenopus</taxon>
    </lineage>
</organism>
<gene>
    <name type="primary">dhx32</name>
</gene>
<proteinExistence type="evidence at transcript level"/>
<accession>Q5XH12</accession>
<feature type="chain" id="PRO_0000292665" description="Putative pre-mRNA-splicing factor ATP-dependent RNA helicase DHX32">
    <location>
        <begin position="1"/>
        <end position="748"/>
    </location>
</feature>
<feature type="domain" description="Helicase ATP-binding">
    <location>
        <begin position="74"/>
        <end position="240"/>
    </location>
</feature>
<feature type="domain" description="Helicase C-terminal">
    <location>
        <begin position="263"/>
        <end position="439"/>
    </location>
</feature>
<feature type="region of interest" description="Disordered" evidence="2">
    <location>
        <begin position="706"/>
        <end position="748"/>
    </location>
</feature>
<feature type="binding site" evidence="1">
    <location>
        <begin position="87"/>
        <end position="94"/>
    </location>
    <ligand>
        <name>ATP</name>
        <dbReference type="ChEBI" id="CHEBI:30616"/>
    </ligand>
</feature>
<keyword id="KW-0067">ATP-binding</keyword>
<keyword id="KW-0347">Helicase</keyword>
<keyword id="KW-0378">Hydrolase</keyword>
<keyword id="KW-0496">Mitochondrion</keyword>
<keyword id="KW-0547">Nucleotide-binding</keyword>
<keyword id="KW-0539">Nucleus</keyword>
<keyword id="KW-1185">Reference proteome</keyword>
<name>DHX32_XENLA</name>
<comment type="catalytic activity">
    <reaction>
        <text>ATP + H2O = ADP + phosphate + H(+)</text>
        <dbReference type="Rhea" id="RHEA:13065"/>
        <dbReference type="ChEBI" id="CHEBI:15377"/>
        <dbReference type="ChEBI" id="CHEBI:15378"/>
        <dbReference type="ChEBI" id="CHEBI:30616"/>
        <dbReference type="ChEBI" id="CHEBI:43474"/>
        <dbReference type="ChEBI" id="CHEBI:456216"/>
        <dbReference type="EC" id="3.6.4.13"/>
    </reaction>
</comment>
<comment type="subcellular location">
    <subcellularLocation>
        <location evidence="1">Nucleus</location>
    </subcellularLocation>
    <subcellularLocation>
        <location evidence="1">Mitochondrion</location>
    </subcellularLocation>
</comment>
<comment type="similarity">
    <text evidence="3">Belongs to the DEAD box helicase family. DEAH subfamily.</text>
</comment>
<evidence type="ECO:0000250" key="1"/>
<evidence type="ECO:0000256" key="2">
    <source>
        <dbReference type="SAM" id="MobiDB-lite"/>
    </source>
</evidence>
<evidence type="ECO:0000305" key="3"/>
<dbReference type="EC" id="3.6.4.13"/>
<dbReference type="EMBL" id="BC084264">
    <property type="protein sequence ID" value="AAH84264.1"/>
    <property type="molecule type" value="mRNA"/>
</dbReference>
<dbReference type="RefSeq" id="NP_001088262.1">
    <property type="nucleotide sequence ID" value="NM_001094793.1"/>
</dbReference>
<dbReference type="SMR" id="Q5XH12"/>
<dbReference type="GeneID" id="495093"/>
<dbReference type="KEGG" id="xla:495093"/>
<dbReference type="AGR" id="Xenbase:XB-GENE-982116"/>
<dbReference type="CTD" id="495093"/>
<dbReference type="Xenbase" id="XB-GENE-982116">
    <property type="gene designation" value="dhx32.L"/>
</dbReference>
<dbReference type="OrthoDB" id="10253254at2759"/>
<dbReference type="Proteomes" id="UP000186698">
    <property type="component" value="Chromosome 7L"/>
</dbReference>
<dbReference type="Bgee" id="495093">
    <property type="expression patterns" value="Expressed in gastrula and 18 other cell types or tissues"/>
</dbReference>
<dbReference type="GO" id="GO:0005739">
    <property type="term" value="C:mitochondrion"/>
    <property type="evidence" value="ECO:0007669"/>
    <property type="project" value="UniProtKB-SubCell"/>
</dbReference>
<dbReference type="GO" id="GO:0005681">
    <property type="term" value="C:spliceosomal complex"/>
    <property type="evidence" value="ECO:0000318"/>
    <property type="project" value="GO_Central"/>
</dbReference>
<dbReference type="GO" id="GO:0005524">
    <property type="term" value="F:ATP binding"/>
    <property type="evidence" value="ECO:0007669"/>
    <property type="project" value="UniProtKB-KW"/>
</dbReference>
<dbReference type="GO" id="GO:0016887">
    <property type="term" value="F:ATP hydrolysis activity"/>
    <property type="evidence" value="ECO:0007669"/>
    <property type="project" value="RHEA"/>
</dbReference>
<dbReference type="GO" id="GO:0004386">
    <property type="term" value="F:helicase activity"/>
    <property type="evidence" value="ECO:0000318"/>
    <property type="project" value="GO_Central"/>
</dbReference>
<dbReference type="GO" id="GO:0003723">
    <property type="term" value="F:RNA binding"/>
    <property type="evidence" value="ECO:0000318"/>
    <property type="project" value="GO_Central"/>
</dbReference>
<dbReference type="GO" id="GO:0003724">
    <property type="term" value="F:RNA helicase activity"/>
    <property type="evidence" value="ECO:0007669"/>
    <property type="project" value="UniProtKB-EC"/>
</dbReference>
<dbReference type="CDD" id="cd17977">
    <property type="entry name" value="DEXHc_DHX32"/>
    <property type="match status" value="1"/>
</dbReference>
<dbReference type="CDD" id="cd18791">
    <property type="entry name" value="SF2_C_RHA"/>
    <property type="match status" value="1"/>
</dbReference>
<dbReference type="FunFam" id="3.40.50.300:FF:001007">
    <property type="entry name" value="putative pre-mRNA-splicing factor ATP-dependent RNA helicase DHX32"/>
    <property type="match status" value="1"/>
</dbReference>
<dbReference type="FunFam" id="3.40.50.300:FF:001055">
    <property type="entry name" value="putative pre-mRNA-splicing factor ATP-dependent RNA helicase DHX32"/>
    <property type="match status" value="1"/>
</dbReference>
<dbReference type="Gene3D" id="1.20.120.1080">
    <property type="match status" value="1"/>
</dbReference>
<dbReference type="Gene3D" id="3.40.50.300">
    <property type="entry name" value="P-loop containing nucleotide triphosphate hydrolases"/>
    <property type="match status" value="2"/>
</dbReference>
<dbReference type="InterPro" id="IPR011709">
    <property type="entry name" value="DEAD-box_helicase_OB_fold"/>
</dbReference>
<dbReference type="InterPro" id="IPR048333">
    <property type="entry name" value="HA2_WH"/>
</dbReference>
<dbReference type="InterPro" id="IPR007502">
    <property type="entry name" value="Helicase-assoc_dom"/>
</dbReference>
<dbReference type="InterPro" id="IPR027417">
    <property type="entry name" value="P-loop_NTPase"/>
</dbReference>
<dbReference type="PANTHER" id="PTHR18934">
    <property type="entry name" value="ATP-DEPENDENT RNA HELICASE"/>
    <property type="match status" value="1"/>
</dbReference>
<dbReference type="PANTHER" id="PTHR18934:SF88">
    <property type="entry name" value="PRE-MRNA-SPLICING FACTOR ATP-DEPENDENT RNA HELICASE DHX32-RELATED"/>
    <property type="match status" value="1"/>
</dbReference>
<dbReference type="Pfam" id="PF21010">
    <property type="entry name" value="HA2_C"/>
    <property type="match status" value="1"/>
</dbReference>
<dbReference type="Pfam" id="PF04408">
    <property type="entry name" value="HA2_N"/>
    <property type="match status" value="1"/>
</dbReference>
<dbReference type="Pfam" id="PF07717">
    <property type="entry name" value="OB_NTP_bind"/>
    <property type="match status" value="1"/>
</dbReference>
<dbReference type="SMART" id="SM00847">
    <property type="entry name" value="HA2"/>
    <property type="match status" value="1"/>
</dbReference>
<dbReference type="SUPFAM" id="SSF52540">
    <property type="entry name" value="P-loop containing nucleoside triphosphate hydrolases"/>
    <property type="match status" value="1"/>
</dbReference>
<reference key="1">
    <citation type="submission" date="2004-10" db="EMBL/GenBank/DDBJ databases">
        <authorList>
            <consortium name="NIH - Xenopus Gene Collection (XGC) project"/>
        </authorList>
    </citation>
    <scope>NUCLEOTIDE SEQUENCE [LARGE SCALE MRNA]</scope>
    <source>
        <tissue>Kidney</tissue>
    </source>
</reference>
<sequence>MALSLEAYEQDIDELISDEKSCCLDVTDSSDVEGDELNDLELNPFDGLPYSSRFYKLLKERETLPIWKIKYDFLEHLAHNQIVVVSAGPKSGKSSQIPQWCAEYCLAGHYQHGAVVCTQAHKQTAVWLAMRVADEMDVNIGHEVGYIVPFENCCTSETILRYCTDEMLRREMMSNPLLSSYGVVIIDDVYERFVSTDVLLSFLKVIAVSRPELKVVIITCPSLSGTLVSYYGNAPLVEAENTHSVESVYTTSLPRDYFHSALRLLFEIHHTKEKGDIVVFLACEEEIKRAYEHIKQEALHMNPELGELMPIALYPHQSISDYIPYEELDDNSKNPKRKVVLTTSLGESLIWMKNIFFVIDVGIEKRKVYNTRIRAESLVTQPISKVRAKMRKHILSSSSEGKLFCLYPEDFAHEMKPFLTAKVEECNLISMVLFLKRMDIAGLAHCDFINRPDPESLMQALEDLDYLAALDNDGNLSEFGIIMSEFPLDPQLSKSILAACEFDCVDEMLTLAAMVTAPNCFIDLPPEAKELDLIGKGKFFHPEGDHFTLINIYNEYEQMKRNNASQYDVEKWCQNHCLSFVALEMARAIRNELLDIMRRIELPLTGPAFGSDENVTNIKKSLLSGYFMQIARDVDGLGNYIMLTHKQVGQLHPDSGFCNSAKVPEWVLFHEFSVSERSCIRIVSEISPNLFMEFVPPYYFSNLPPSETKDLLQQDQTPDTPPTEEPREEEPLHEANDEGTAEQRCIIQ</sequence>